<dbReference type="EC" id="2.7.4.9" evidence="1"/>
<dbReference type="EMBL" id="CP000112">
    <property type="protein sequence ID" value="ABB39135.1"/>
    <property type="molecule type" value="Genomic_DNA"/>
</dbReference>
<dbReference type="RefSeq" id="WP_011368212.1">
    <property type="nucleotide sequence ID" value="NC_007519.1"/>
</dbReference>
<dbReference type="SMR" id="Q30YW1"/>
<dbReference type="STRING" id="207559.Dde_2338"/>
<dbReference type="KEGG" id="dde:Dde_2338"/>
<dbReference type="eggNOG" id="COG0125">
    <property type="taxonomic scope" value="Bacteria"/>
</dbReference>
<dbReference type="HOGENOM" id="CLU_049131_0_0_7"/>
<dbReference type="Proteomes" id="UP000002710">
    <property type="component" value="Chromosome"/>
</dbReference>
<dbReference type="GO" id="GO:0005829">
    <property type="term" value="C:cytosol"/>
    <property type="evidence" value="ECO:0007669"/>
    <property type="project" value="TreeGrafter"/>
</dbReference>
<dbReference type="GO" id="GO:0005524">
    <property type="term" value="F:ATP binding"/>
    <property type="evidence" value="ECO:0007669"/>
    <property type="project" value="UniProtKB-UniRule"/>
</dbReference>
<dbReference type="GO" id="GO:0004798">
    <property type="term" value="F:dTMP kinase activity"/>
    <property type="evidence" value="ECO:0007669"/>
    <property type="project" value="UniProtKB-UniRule"/>
</dbReference>
<dbReference type="GO" id="GO:0006233">
    <property type="term" value="P:dTDP biosynthetic process"/>
    <property type="evidence" value="ECO:0007669"/>
    <property type="project" value="InterPro"/>
</dbReference>
<dbReference type="GO" id="GO:0006235">
    <property type="term" value="P:dTTP biosynthetic process"/>
    <property type="evidence" value="ECO:0007669"/>
    <property type="project" value="UniProtKB-UniRule"/>
</dbReference>
<dbReference type="GO" id="GO:0006227">
    <property type="term" value="P:dUDP biosynthetic process"/>
    <property type="evidence" value="ECO:0007669"/>
    <property type="project" value="TreeGrafter"/>
</dbReference>
<dbReference type="CDD" id="cd01672">
    <property type="entry name" value="TMPK"/>
    <property type="match status" value="1"/>
</dbReference>
<dbReference type="FunFam" id="3.40.50.300:FF:000225">
    <property type="entry name" value="Thymidylate kinase"/>
    <property type="match status" value="1"/>
</dbReference>
<dbReference type="Gene3D" id="3.40.50.300">
    <property type="entry name" value="P-loop containing nucleotide triphosphate hydrolases"/>
    <property type="match status" value="1"/>
</dbReference>
<dbReference type="HAMAP" id="MF_00165">
    <property type="entry name" value="Thymidylate_kinase"/>
    <property type="match status" value="1"/>
</dbReference>
<dbReference type="InterPro" id="IPR027417">
    <property type="entry name" value="P-loop_NTPase"/>
</dbReference>
<dbReference type="InterPro" id="IPR039430">
    <property type="entry name" value="Thymidylate_kin-like_dom"/>
</dbReference>
<dbReference type="InterPro" id="IPR018095">
    <property type="entry name" value="Thymidylate_kin_CS"/>
</dbReference>
<dbReference type="InterPro" id="IPR018094">
    <property type="entry name" value="Thymidylate_kinase"/>
</dbReference>
<dbReference type="NCBIfam" id="TIGR00041">
    <property type="entry name" value="DTMP_kinase"/>
    <property type="match status" value="1"/>
</dbReference>
<dbReference type="PANTHER" id="PTHR10344">
    <property type="entry name" value="THYMIDYLATE KINASE"/>
    <property type="match status" value="1"/>
</dbReference>
<dbReference type="PANTHER" id="PTHR10344:SF4">
    <property type="entry name" value="UMP-CMP KINASE 2, MITOCHONDRIAL"/>
    <property type="match status" value="1"/>
</dbReference>
<dbReference type="Pfam" id="PF02223">
    <property type="entry name" value="Thymidylate_kin"/>
    <property type="match status" value="1"/>
</dbReference>
<dbReference type="SUPFAM" id="SSF52540">
    <property type="entry name" value="P-loop containing nucleoside triphosphate hydrolases"/>
    <property type="match status" value="1"/>
</dbReference>
<dbReference type="PROSITE" id="PS01331">
    <property type="entry name" value="THYMIDYLATE_KINASE"/>
    <property type="match status" value="1"/>
</dbReference>
<comment type="function">
    <text evidence="1">Phosphorylation of dTMP to form dTDP in both de novo and salvage pathways of dTTP synthesis.</text>
</comment>
<comment type="catalytic activity">
    <reaction evidence="1">
        <text>dTMP + ATP = dTDP + ADP</text>
        <dbReference type="Rhea" id="RHEA:13517"/>
        <dbReference type="ChEBI" id="CHEBI:30616"/>
        <dbReference type="ChEBI" id="CHEBI:58369"/>
        <dbReference type="ChEBI" id="CHEBI:63528"/>
        <dbReference type="ChEBI" id="CHEBI:456216"/>
        <dbReference type="EC" id="2.7.4.9"/>
    </reaction>
</comment>
<comment type="similarity">
    <text evidence="1">Belongs to the thymidylate kinase family.</text>
</comment>
<organism>
    <name type="scientific">Oleidesulfovibrio alaskensis (strain ATCC BAA-1058 / DSM 17464 / G20)</name>
    <name type="common">Desulfovibrio alaskensis</name>
    <dbReference type="NCBI Taxonomy" id="207559"/>
    <lineage>
        <taxon>Bacteria</taxon>
        <taxon>Pseudomonadati</taxon>
        <taxon>Thermodesulfobacteriota</taxon>
        <taxon>Desulfovibrionia</taxon>
        <taxon>Desulfovibrionales</taxon>
        <taxon>Desulfovibrionaceae</taxon>
        <taxon>Oleidesulfovibrio</taxon>
    </lineage>
</organism>
<evidence type="ECO:0000255" key="1">
    <source>
        <dbReference type="HAMAP-Rule" id="MF_00165"/>
    </source>
</evidence>
<protein>
    <recommendedName>
        <fullName evidence="1">Thymidylate kinase</fullName>
        <ecNumber evidence="1">2.7.4.9</ecNumber>
    </recommendedName>
    <alternativeName>
        <fullName evidence="1">dTMP kinase</fullName>
    </alternativeName>
</protein>
<feature type="chain" id="PRO_1000023184" description="Thymidylate kinase">
    <location>
        <begin position="1"/>
        <end position="212"/>
    </location>
</feature>
<feature type="binding site" evidence="1">
    <location>
        <begin position="7"/>
        <end position="14"/>
    </location>
    <ligand>
        <name>ATP</name>
        <dbReference type="ChEBI" id="CHEBI:30616"/>
    </ligand>
</feature>
<gene>
    <name evidence="1" type="primary">tmk</name>
    <name type="ordered locus">Dde_2338</name>
</gene>
<proteinExistence type="inferred from homology"/>
<keyword id="KW-0067">ATP-binding</keyword>
<keyword id="KW-0418">Kinase</keyword>
<keyword id="KW-0545">Nucleotide biosynthesis</keyword>
<keyword id="KW-0547">Nucleotide-binding</keyword>
<keyword id="KW-1185">Reference proteome</keyword>
<keyword id="KW-0808">Transferase</keyword>
<accession>Q30YW1</accession>
<sequence>MFITFEGIEGSGKSTALARLKDWLQEHGHGATLTREPGGSRLGGILRSILLDIGNDDLTGETELFLYLADRSQHVHQVIRPALAEGVAVISDRYADSTVVYQGYGRGLDPALLHRLNDVAVRGLWPDLTLLFDLEPEIGLKRATTRNLREGTGATEGRFEAESLAFHTRVREGYLTWAALNKERFRIIDAAASPDEVFEQVRSAVADVFTIG</sequence>
<reference key="1">
    <citation type="journal article" date="2011" name="J. Bacteriol.">
        <title>Complete genome sequence and updated annotation of Desulfovibrio alaskensis G20.</title>
        <authorList>
            <person name="Hauser L.J."/>
            <person name="Land M.L."/>
            <person name="Brown S.D."/>
            <person name="Larimer F."/>
            <person name="Keller K.L."/>
            <person name="Rapp-Giles B.J."/>
            <person name="Price M.N."/>
            <person name="Lin M."/>
            <person name="Bruce D.C."/>
            <person name="Detter J.C."/>
            <person name="Tapia R."/>
            <person name="Han C.S."/>
            <person name="Goodwin L.A."/>
            <person name="Cheng J.F."/>
            <person name="Pitluck S."/>
            <person name="Copeland A."/>
            <person name="Lucas S."/>
            <person name="Nolan M."/>
            <person name="Lapidus A.L."/>
            <person name="Palumbo A.V."/>
            <person name="Wall J.D."/>
        </authorList>
    </citation>
    <scope>NUCLEOTIDE SEQUENCE [LARGE SCALE GENOMIC DNA]</scope>
    <source>
        <strain>ATCC BAA-1058 / DSM 17464 / G20</strain>
    </source>
</reference>
<name>KTHY_OLEA2</name>